<reference key="1">
    <citation type="journal article" date="2000" name="Science">
        <title>The genome sequence of Drosophila melanogaster.</title>
        <authorList>
            <person name="Adams M.D."/>
            <person name="Celniker S.E."/>
            <person name="Holt R.A."/>
            <person name="Evans C.A."/>
            <person name="Gocayne J.D."/>
            <person name="Amanatides P.G."/>
            <person name="Scherer S.E."/>
            <person name="Li P.W."/>
            <person name="Hoskins R.A."/>
            <person name="Galle R.F."/>
            <person name="George R.A."/>
            <person name="Lewis S.E."/>
            <person name="Richards S."/>
            <person name="Ashburner M."/>
            <person name="Henderson S.N."/>
            <person name="Sutton G.G."/>
            <person name="Wortman J.R."/>
            <person name="Yandell M.D."/>
            <person name="Zhang Q."/>
            <person name="Chen L.X."/>
            <person name="Brandon R.C."/>
            <person name="Rogers Y.-H.C."/>
            <person name="Blazej R.G."/>
            <person name="Champe M."/>
            <person name="Pfeiffer B.D."/>
            <person name="Wan K.H."/>
            <person name="Doyle C."/>
            <person name="Baxter E.G."/>
            <person name="Helt G."/>
            <person name="Nelson C.R."/>
            <person name="Miklos G.L.G."/>
            <person name="Abril J.F."/>
            <person name="Agbayani A."/>
            <person name="An H.-J."/>
            <person name="Andrews-Pfannkoch C."/>
            <person name="Baldwin D."/>
            <person name="Ballew R.M."/>
            <person name="Basu A."/>
            <person name="Baxendale J."/>
            <person name="Bayraktaroglu L."/>
            <person name="Beasley E.M."/>
            <person name="Beeson K.Y."/>
            <person name="Benos P.V."/>
            <person name="Berman B.P."/>
            <person name="Bhandari D."/>
            <person name="Bolshakov S."/>
            <person name="Borkova D."/>
            <person name="Botchan M.R."/>
            <person name="Bouck J."/>
            <person name="Brokstein P."/>
            <person name="Brottier P."/>
            <person name="Burtis K.C."/>
            <person name="Busam D.A."/>
            <person name="Butler H."/>
            <person name="Cadieu E."/>
            <person name="Center A."/>
            <person name="Chandra I."/>
            <person name="Cherry J.M."/>
            <person name="Cawley S."/>
            <person name="Dahlke C."/>
            <person name="Davenport L.B."/>
            <person name="Davies P."/>
            <person name="de Pablos B."/>
            <person name="Delcher A."/>
            <person name="Deng Z."/>
            <person name="Mays A.D."/>
            <person name="Dew I."/>
            <person name="Dietz S.M."/>
            <person name="Dodson K."/>
            <person name="Doup L.E."/>
            <person name="Downes M."/>
            <person name="Dugan-Rocha S."/>
            <person name="Dunkov B.C."/>
            <person name="Dunn P."/>
            <person name="Durbin K.J."/>
            <person name="Evangelista C.C."/>
            <person name="Ferraz C."/>
            <person name="Ferriera S."/>
            <person name="Fleischmann W."/>
            <person name="Fosler C."/>
            <person name="Gabrielian A.E."/>
            <person name="Garg N.S."/>
            <person name="Gelbart W.M."/>
            <person name="Glasser K."/>
            <person name="Glodek A."/>
            <person name="Gong F."/>
            <person name="Gorrell J.H."/>
            <person name="Gu Z."/>
            <person name="Guan P."/>
            <person name="Harris M."/>
            <person name="Harris N.L."/>
            <person name="Harvey D.A."/>
            <person name="Heiman T.J."/>
            <person name="Hernandez J.R."/>
            <person name="Houck J."/>
            <person name="Hostin D."/>
            <person name="Houston K.A."/>
            <person name="Howland T.J."/>
            <person name="Wei M.-H."/>
            <person name="Ibegwam C."/>
            <person name="Jalali M."/>
            <person name="Kalush F."/>
            <person name="Karpen G.H."/>
            <person name="Ke Z."/>
            <person name="Kennison J.A."/>
            <person name="Ketchum K.A."/>
            <person name="Kimmel B.E."/>
            <person name="Kodira C.D."/>
            <person name="Kraft C.L."/>
            <person name="Kravitz S."/>
            <person name="Kulp D."/>
            <person name="Lai Z."/>
            <person name="Lasko P."/>
            <person name="Lei Y."/>
            <person name="Levitsky A.A."/>
            <person name="Li J.H."/>
            <person name="Li Z."/>
            <person name="Liang Y."/>
            <person name="Lin X."/>
            <person name="Liu X."/>
            <person name="Mattei B."/>
            <person name="McIntosh T.C."/>
            <person name="McLeod M.P."/>
            <person name="McPherson D."/>
            <person name="Merkulov G."/>
            <person name="Milshina N.V."/>
            <person name="Mobarry C."/>
            <person name="Morris J."/>
            <person name="Moshrefi A."/>
            <person name="Mount S.M."/>
            <person name="Moy M."/>
            <person name="Murphy B."/>
            <person name="Murphy L."/>
            <person name="Muzny D.M."/>
            <person name="Nelson D.L."/>
            <person name="Nelson D.R."/>
            <person name="Nelson K.A."/>
            <person name="Nixon K."/>
            <person name="Nusskern D.R."/>
            <person name="Pacleb J.M."/>
            <person name="Palazzolo M."/>
            <person name="Pittman G.S."/>
            <person name="Pan S."/>
            <person name="Pollard J."/>
            <person name="Puri V."/>
            <person name="Reese M.G."/>
            <person name="Reinert K."/>
            <person name="Remington K."/>
            <person name="Saunders R.D.C."/>
            <person name="Scheeler F."/>
            <person name="Shen H."/>
            <person name="Shue B.C."/>
            <person name="Siden-Kiamos I."/>
            <person name="Simpson M."/>
            <person name="Skupski M.P."/>
            <person name="Smith T.J."/>
            <person name="Spier E."/>
            <person name="Spradling A.C."/>
            <person name="Stapleton M."/>
            <person name="Strong R."/>
            <person name="Sun E."/>
            <person name="Svirskas R."/>
            <person name="Tector C."/>
            <person name="Turner R."/>
            <person name="Venter E."/>
            <person name="Wang A.H."/>
            <person name="Wang X."/>
            <person name="Wang Z.-Y."/>
            <person name="Wassarman D.A."/>
            <person name="Weinstock G.M."/>
            <person name="Weissenbach J."/>
            <person name="Williams S.M."/>
            <person name="Woodage T."/>
            <person name="Worley K.C."/>
            <person name="Wu D."/>
            <person name="Yang S."/>
            <person name="Yao Q.A."/>
            <person name="Ye J."/>
            <person name="Yeh R.-F."/>
            <person name="Zaveri J.S."/>
            <person name="Zhan M."/>
            <person name="Zhang G."/>
            <person name="Zhao Q."/>
            <person name="Zheng L."/>
            <person name="Zheng X.H."/>
            <person name="Zhong F.N."/>
            <person name="Zhong W."/>
            <person name="Zhou X."/>
            <person name="Zhu S.C."/>
            <person name="Zhu X."/>
            <person name="Smith H.O."/>
            <person name="Gibbs R.A."/>
            <person name="Myers E.W."/>
            <person name="Rubin G.M."/>
            <person name="Venter J.C."/>
        </authorList>
    </citation>
    <scope>NUCLEOTIDE SEQUENCE [LARGE SCALE GENOMIC DNA]</scope>
    <source>
        <strain>Berkeley</strain>
    </source>
</reference>
<reference key="2">
    <citation type="journal article" date="2002" name="Genome Biol.">
        <title>Annotation of the Drosophila melanogaster euchromatic genome: a systematic review.</title>
        <authorList>
            <person name="Misra S."/>
            <person name="Crosby M.A."/>
            <person name="Mungall C.J."/>
            <person name="Matthews B.B."/>
            <person name="Campbell K.S."/>
            <person name="Hradecky P."/>
            <person name="Huang Y."/>
            <person name="Kaminker J.S."/>
            <person name="Millburn G.H."/>
            <person name="Prochnik S.E."/>
            <person name="Smith C.D."/>
            <person name="Tupy J.L."/>
            <person name="Whitfield E.J."/>
            <person name="Bayraktaroglu L."/>
            <person name="Berman B.P."/>
            <person name="Bettencourt B.R."/>
            <person name="Celniker S.E."/>
            <person name="de Grey A.D.N.J."/>
            <person name="Drysdale R.A."/>
            <person name="Harris N.L."/>
            <person name="Richter J."/>
            <person name="Russo S."/>
            <person name="Schroeder A.J."/>
            <person name="Shu S.Q."/>
            <person name="Stapleton M."/>
            <person name="Yamada C."/>
            <person name="Ashburner M."/>
            <person name="Gelbart W.M."/>
            <person name="Rubin G.M."/>
            <person name="Lewis S.E."/>
        </authorList>
    </citation>
    <scope>GENOME REANNOTATION</scope>
    <source>
        <strain>Berkeley</strain>
    </source>
</reference>
<reference key="3">
    <citation type="journal article" date="2002" name="Genome Biol.">
        <title>A Drosophila full-length cDNA resource.</title>
        <authorList>
            <person name="Stapleton M."/>
            <person name="Carlson J.W."/>
            <person name="Brokstein P."/>
            <person name="Yu C."/>
            <person name="Champe M."/>
            <person name="George R.A."/>
            <person name="Guarin H."/>
            <person name="Kronmiller B."/>
            <person name="Pacleb J.M."/>
            <person name="Park S."/>
            <person name="Wan K.H."/>
            <person name="Rubin G.M."/>
            <person name="Celniker S.E."/>
        </authorList>
    </citation>
    <scope>NUCLEOTIDE SEQUENCE [LARGE SCALE MRNA] OF 761-1465</scope>
    <source>
        <strain>Berkeley</strain>
        <tissue>Embryo</tissue>
    </source>
</reference>
<reference key="4">
    <citation type="journal article" date="2007" name="Mol. Biosyst.">
        <title>An integrated chemical, mass spectrometric and computational strategy for (quantitative) phosphoproteomics: application to Drosophila melanogaster Kc167 cells.</title>
        <authorList>
            <person name="Bodenmiller B."/>
            <person name="Mueller L.N."/>
            <person name="Pedrioli P.G.A."/>
            <person name="Pflieger D."/>
            <person name="Juenger M.A."/>
            <person name="Eng J.K."/>
            <person name="Aebersold R."/>
            <person name="Tao W.A."/>
        </authorList>
    </citation>
    <scope>PHOSPHORYLATION [LARGE SCALE ANALYSIS] AT SER-350 AND SER-963</scope>
    <scope>IDENTIFICATION BY MASS SPECTROMETRY</scope>
</reference>
<reference key="5">
    <citation type="journal article" date="2008" name="J. Proteome Res.">
        <title>Phosphoproteome analysis of Drosophila melanogaster embryos.</title>
        <authorList>
            <person name="Zhai B."/>
            <person name="Villen J."/>
            <person name="Beausoleil S.A."/>
            <person name="Mintseris J."/>
            <person name="Gygi S.P."/>
        </authorList>
    </citation>
    <scope>PHOSPHORYLATION [LARGE SCALE ANALYSIS] AT SER-45; SER-49; SER-52; SER-64; SER-75; SER-109; SER-114; SER-350; SER-354; SER-381; SER-404; SER-406; SER-432; SER-434; SER-444; SER-456; SER-458; SER-468; THR-693; SER-963; THR-973; SER-990; SER-1093; SER-1094 AND SER-1287</scope>
    <scope>IDENTIFICATION BY MASS SPECTROMETRY</scope>
    <source>
        <tissue>Embryo</tissue>
    </source>
</reference>
<reference key="6">
    <citation type="journal article" date="2012" name="DNA Repair">
        <title>Drosophila Claspin is required for the G2 arrest that is induced by DNA replication stress but not by DNA double-strand breaks.</title>
        <authorList>
            <person name="Lee E.M."/>
            <person name="Trinh T.T."/>
            <person name="Shim H.J."/>
            <person name="Park S.Y."/>
            <person name="Nguyen T.T."/>
            <person name="Kim M.J."/>
            <person name="Song Y.H."/>
        </authorList>
    </citation>
    <scope>FUNCTION</scope>
    <scope>SUBCELLULAR LOCATION</scope>
    <scope>TISSUE SPECIFICITY</scope>
    <scope>DEVELOPMENTAL STAGE</scope>
    <scope>DISRUPTION PHENOTYPE</scope>
    <scope>PHOSPHORYLATION</scope>
</reference>
<sequence length="1465" mass="165283">MSESLAETAAAAENEEQADDSMEKLVFDEEDEQMVSGEDLLGGKSLIMSDDSEAEDGSQEKPLSPKDRRRRMMDSDQEEDAMDQGNGDSIKNSEDVEEEMVSRPKKKVSAIIDSDNDDEQQAEKKTQKEEGKQPVKSKKKRSQVNQEDQEKPVKSNKTKKAVKNKTQANKAEDDQDNPSKEDKPKKVVKNKKQTNKDGKPQTNEEYDHHQQHEKPAKTQKSKKLAKKQKQQEDDKEDNGTEQEKKKPSPKSKAKKSDKSKIDSLMDNEEDAGEDLKMYQEDQEPQKQKTKKSAKKTNKDSKEESGEDQEHQEQKKPLKKIKLDNIDTKEDKEQIVKPKKMAKKNKQKVLSDDESEENQNEKVDQDHDLKKMSSENELEMGSDKEDQEMQEPPKKAKKNKQRMDSESEDEIPKTESEKITSSPKNKLKGLVDSESEPEETAEEVSPVKNKLKGLVDSESEPELDNPEESAGEQEAPMESALSREKPKKAKVVRESAKKALEGMQAIQSEQQRLHREAHINVPYHQPKPRTLKEFLSRRTINAPLATALAGGSPMPSRQPRKSVGLRMTREELEAYAKLMEDRAKEATEFFKSESESDEEDDSENEEPMELKDNPGVMDEMLDNPKTPEQPKNDTEDMTSQAVIEVPVLGEDKTDDTVGDEAMVADSITEEEPIASTSTAAALKLADNFEIQQETNAKSPSKVCLVTEVVELPKLDLSTINITPSSKPATPKISEVIRQLKIEKSLDESPSLKGDPNMVIDLETGDMFAKKPTGVDDLLNRLMKTREAKKHKTTETVNILTTEHGKLEMSKVSIHLHEEEIAKEPKPGAGYMKMQEHLKTLITKKRMEDLRKKQAEEQEKMAEDEEEGMDVDEEYEPEDKPGYAEVTINEDEEIIDKVDSTAEDDGDAEENKNDADEDPEDNPVEDSEDEKNDSESEQECEANPEPETQTRKKNRIIKAFEDDNSDEDDLDLLQTPKPSNVAPITATQLQLSAHKLFDVETRRTASDEENELLDLCSGQFPQTQMLSSDAPSVDTAVISQIPMTQFGGSSQAADELEGLCSGTFATQLPSQAPTQQPEQQEESEVPAAVANRIVSSDEEAQEDALEVDKPRNKKLTKKRPKKKAKLGFSDDEDSDDEVEEFDEESDAEPVEEIPETFVDYDSEENEIVVEMTKKDRKIRAANFVDKEAELSESEWGSADEDEKNMDEYDIELGDEDQFDRDKLRHELGQIHARKMMDQDIREVRKIKELLFEEEEEGANRQRQFRWKNVEAGFSLDDNRTDNGEGNDGSGDEENEHLWRKIRYEREQLLLEKGLKPEVASPLSTSVINTSNNGNSPAIRRLNIISSKKTTVEVKKNSPFLISKTIAGKQQKSAVRGSFLIRDQQTLSKLAGLTKGTSGDVDAAEGTISVKSAKAKNFVFATLTEEEHENRKRKAADILNSSTETGVNFIKKPKLEPRRDKCLIDQLL</sequence>
<proteinExistence type="evidence at protein level"/>
<comment type="function">
    <text evidence="5">Required for checkpoint signaling in response to DNA replication stress; either resulting from normal embryogenesis or induced by the DNA synthesis inhibitor hydroxyurea (HU). It is not required for the G2 arrest resulting from DNA double strand breaks induced by ionizing irradiation (IR). Necessary for the timely phosphorylation of Cdk1 at the mid-blastula transition. May have a minor role in maintaining genomic stability in mitotic cells.</text>
</comment>
<comment type="subcellular location">
    <subcellularLocation>
        <location evidence="5">Nucleus</location>
    </subcellularLocation>
</comment>
<comment type="tissue specificity">
    <text evidence="5">Detected in the ovary but not in the testis (at protein level).</text>
</comment>
<comment type="developmental stage">
    <text evidence="5">Expressed during S phase, in a cell-cycle-dependent fashion. Expression levels are highest in embryos (0-4 hours old) and in the ovaries of adult females. Little to no expression in larvae and pupae (at protein level).</text>
</comment>
<comment type="PTM">
    <text evidence="5">Phosphorylated in response to DNA damage by IR and HU treatment. Phosphorylation does not require mei-41 or tefu.</text>
</comment>
<comment type="disruption phenotype">
    <text evidence="5">Hatch rate of embryos is less than one percent. Nuclear morphology of embryos is normal until the 10th nuclear cycle when the shape and size of nuclei becomes abnormal and surface nuclei also begin to exhibit an irregular distribution. The phosphorylation of Cdk1 at the mid-blastula transition (between 2 to 4 hours after egg deposition) is also severely delayed. Increased sensitivity to HU with reduced survival rates. In the eye disks from mutant third stage larvae treated with HU, there is a higher percentage of mitotic cells compared to untreated mutant larvae. Is insensitive to ionizing radiation; the percentage of mitotic cells is unaffected in the eye disks of larvae treated with IR, and IR-induced apoptosis in larvae also appears to be unaffected.</text>
</comment>
<comment type="similarity">
    <text evidence="6">Belongs to the claspin family.</text>
</comment>
<comment type="sequence caution" evidence="6">
    <conflict type="erroneous initiation">
        <sequence resource="EMBL-CDS" id="AAM29654"/>
    </conflict>
    <text>Truncated N-terminus.</text>
</comment>
<name>CLSPN_DROME</name>
<evidence type="ECO:0000255" key="1"/>
<evidence type="ECO:0000256" key="2">
    <source>
        <dbReference type="SAM" id="MobiDB-lite"/>
    </source>
</evidence>
<evidence type="ECO:0000269" key="3">
    <source>
    </source>
</evidence>
<evidence type="ECO:0000269" key="4">
    <source>
    </source>
</evidence>
<evidence type="ECO:0000269" key="5">
    <source>
    </source>
</evidence>
<evidence type="ECO:0000305" key="6"/>
<evidence type="ECO:0000312" key="7">
    <source>
        <dbReference type="FlyBase" id="FBgn0052251"/>
    </source>
</evidence>
<gene>
    <name evidence="7" type="primary">Claspin</name>
    <name evidence="7" type="ORF">CG32251</name>
</gene>
<protein>
    <recommendedName>
        <fullName evidence="7">Claspin</fullName>
    </recommendedName>
</protein>
<dbReference type="EMBL" id="AE014296">
    <property type="protein sequence ID" value="AAN11599.1"/>
    <property type="molecule type" value="Genomic_DNA"/>
</dbReference>
<dbReference type="EMBL" id="AE014296">
    <property type="protein sequence ID" value="AHN57959.1"/>
    <property type="molecule type" value="Genomic_DNA"/>
</dbReference>
<dbReference type="EMBL" id="AY113649">
    <property type="protein sequence ID" value="AAM29654.1"/>
    <property type="status" value="ALT_INIT"/>
    <property type="molecule type" value="mRNA"/>
</dbReference>
<dbReference type="RefSeq" id="NP_001286934.1">
    <property type="nucleotide sequence ID" value="NM_001300005.1"/>
</dbReference>
<dbReference type="RefSeq" id="NP_728981.1">
    <property type="nucleotide sequence ID" value="NM_168080.2"/>
</dbReference>
<dbReference type="BioGRID" id="77458">
    <property type="interactions" value="5"/>
</dbReference>
<dbReference type="FunCoup" id="Q8IRB5">
    <property type="interactions" value="892"/>
</dbReference>
<dbReference type="IntAct" id="Q8IRB5">
    <property type="interactions" value="4"/>
</dbReference>
<dbReference type="STRING" id="7227.FBpp0312156"/>
<dbReference type="iPTMnet" id="Q8IRB5"/>
<dbReference type="PaxDb" id="7227-FBpp0073142"/>
<dbReference type="EnsemblMetazoa" id="FBtr0073286">
    <property type="protein sequence ID" value="FBpp0073142"/>
    <property type="gene ID" value="FBgn0052251"/>
</dbReference>
<dbReference type="EnsemblMetazoa" id="FBtr0346538">
    <property type="protein sequence ID" value="FBpp0312156"/>
    <property type="gene ID" value="FBgn0052251"/>
</dbReference>
<dbReference type="GeneID" id="326205"/>
<dbReference type="KEGG" id="dme:Dmel_CG32251"/>
<dbReference type="UCSC" id="CG32251-RA">
    <property type="organism name" value="d. melanogaster"/>
</dbReference>
<dbReference type="AGR" id="FB:FBgn0052251"/>
<dbReference type="CTD" id="326205"/>
<dbReference type="FlyBase" id="FBgn0052251">
    <property type="gene designation" value="Claspin"/>
</dbReference>
<dbReference type="VEuPathDB" id="VectorBase:FBgn0052251"/>
<dbReference type="eggNOG" id="KOG4156">
    <property type="taxonomic scope" value="Eukaryota"/>
</dbReference>
<dbReference type="GeneTree" id="ENSGT00390000012738"/>
<dbReference type="HOGENOM" id="CLU_265940_0_0_1"/>
<dbReference type="InParanoid" id="Q8IRB5"/>
<dbReference type="OMA" id="ERFNFRP"/>
<dbReference type="OrthoDB" id="5859781at2759"/>
<dbReference type="PhylomeDB" id="Q8IRB5"/>
<dbReference type="Reactome" id="R-DME-176187">
    <property type="pathway name" value="Activation of ATR in response to replication stress"/>
</dbReference>
<dbReference type="Reactome" id="R-DME-5693607">
    <property type="pathway name" value="Processing of DNA double-strand break ends"/>
</dbReference>
<dbReference type="SignaLink" id="Q8IRB5"/>
<dbReference type="BioGRID-ORCS" id="326205">
    <property type="hits" value="0 hits in 1 CRISPR screen"/>
</dbReference>
<dbReference type="GenomeRNAi" id="326205"/>
<dbReference type="PRO" id="PR:Q8IRB5"/>
<dbReference type="Proteomes" id="UP000000803">
    <property type="component" value="Chromosome 3L"/>
</dbReference>
<dbReference type="Bgee" id="FBgn0052251">
    <property type="expression patterns" value="Expressed in nurse follicle cell (Drosophila) in ovary and 40 other cell types or tissues"/>
</dbReference>
<dbReference type="GO" id="GO:0005634">
    <property type="term" value="C:nucleus"/>
    <property type="evidence" value="ECO:0000314"/>
    <property type="project" value="FlyBase"/>
</dbReference>
<dbReference type="GO" id="GO:0010997">
    <property type="term" value="F:anaphase-promoting complex binding"/>
    <property type="evidence" value="ECO:0000318"/>
    <property type="project" value="GO_Central"/>
</dbReference>
<dbReference type="GO" id="GO:0033314">
    <property type="term" value="P:mitotic DNA replication checkpoint signaling"/>
    <property type="evidence" value="ECO:0000315"/>
    <property type="project" value="FlyBase"/>
</dbReference>
<dbReference type="GO" id="GO:0007095">
    <property type="term" value="P:mitotic G2 DNA damage checkpoint signaling"/>
    <property type="evidence" value="ECO:0000318"/>
    <property type="project" value="GO_Central"/>
</dbReference>
<dbReference type="InterPro" id="IPR024146">
    <property type="entry name" value="Claspin"/>
</dbReference>
<dbReference type="PANTHER" id="PTHR14396">
    <property type="entry name" value="CLASPIN"/>
    <property type="match status" value="1"/>
</dbReference>
<dbReference type="PANTHER" id="PTHR14396:SF10">
    <property type="entry name" value="CLASPIN"/>
    <property type="match status" value="1"/>
</dbReference>
<keyword id="KW-0131">Cell cycle</keyword>
<keyword id="KW-0175">Coiled coil</keyword>
<keyword id="KW-0539">Nucleus</keyword>
<keyword id="KW-0597">Phosphoprotein</keyword>
<keyword id="KW-1185">Reference proteome</keyword>
<accession>Q8IRB5</accession>
<accession>Q8MYR6</accession>
<accession>X2JAN5</accession>
<organism>
    <name type="scientific">Drosophila melanogaster</name>
    <name type="common">Fruit fly</name>
    <dbReference type="NCBI Taxonomy" id="7227"/>
    <lineage>
        <taxon>Eukaryota</taxon>
        <taxon>Metazoa</taxon>
        <taxon>Ecdysozoa</taxon>
        <taxon>Arthropoda</taxon>
        <taxon>Hexapoda</taxon>
        <taxon>Insecta</taxon>
        <taxon>Pterygota</taxon>
        <taxon>Neoptera</taxon>
        <taxon>Endopterygota</taxon>
        <taxon>Diptera</taxon>
        <taxon>Brachycera</taxon>
        <taxon>Muscomorpha</taxon>
        <taxon>Ephydroidea</taxon>
        <taxon>Drosophilidae</taxon>
        <taxon>Drosophila</taxon>
        <taxon>Sophophora</taxon>
    </lineage>
</organism>
<feature type="chain" id="PRO_0000372855" description="Claspin">
    <location>
        <begin position="1"/>
        <end position="1465"/>
    </location>
</feature>
<feature type="region of interest" description="Disordered" evidence="2">
    <location>
        <begin position="1"/>
        <end position="490"/>
    </location>
</feature>
<feature type="region of interest" description="Disordered" evidence="2">
    <location>
        <begin position="544"/>
        <end position="566"/>
    </location>
</feature>
<feature type="region of interest" description="Disordered" evidence="2">
    <location>
        <begin position="585"/>
        <end position="636"/>
    </location>
</feature>
<feature type="region of interest" description="Disordered" evidence="2">
    <location>
        <begin position="845"/>
        <end position="977"/>
    </location>
</feature>
<feature type="region of interest" description="Disordered" evidence="2">
    <location>
        <begin position="1058"/>
        <end position="1154"/>
    </location>
</feature>
<feature type="coiled-coil region" evidence="1">
    <location>
        <begin position="260"/>
        <end position="281"/>
    </location>
</feature>
<feature type="coiled-coil region" evidence="1">
    <location>
        <begin position="564"/>
        <end position="587"/>
    </location>
</feature>
<feature type="coiled-coil region" evidence="1">
    <location>
        <begin position="839"/>
        <end position="874"/>
    </location>
</feature>
<feature type="compositionally biased region" description="Low complexity" evidence="2">
    <location>
        <begin position="1"/>
        <end position="12"/>
    </location>
</feature>
<feature type="compositionally biased region" description="Basic and acidic residues" evidence="2">
    <location>
        <begin position="121"/>
        <end position="133"/>
    </location>
</feature>
<feature type="compositionally biased region" description="Basic residues" evidence="2">
    <location>
        <begin position="154"/>
        <end position="163"/>
    </location>
</feature>
<feature type="compositionally biased region" description="Basic and acidic residues" evidence="2">
    <location>
        <begin position="205"/>
        <end position="216"/>
    </location>
</feature>
<feature type="compositionally biased region" description="Basic residues" evidence="2">
    <location>
        <begin position="217"/>
        <end position="228"/>
    </location>
</feature>
<feature type="compositionally biased region" description="Basic and acidic residues" evidence="2">
    <location>
        <begin position="229"/>
        <end position="246"/>
    </location>
</feature>
<feature type="compositionally biased region" description="Basic and acidic residues" evidence="2">
    <location>
        <begin position="254"/>
        <end position="263"/>
    </location>
</feature>
<feature type="compositionally biased region" description="Basic and acidic residues" evidence="2">
    <location>
        <begin position="273"/>
        <end position="286"/>
    </location>
</feature>
<feature type="compositionally biased region" description="Basic and acidic residues" evidence="2">
    <location>
        <begin position="296"/>
        <end position="335"/>
    </location>
</feature>
<feature type="compositionally biased region" description="Basic residues" evidence="2">
    <location>
        <begin position="336"/>
        <end position="346"/>
    </location>
</feature>
<feature type="compositionally biased region" description="Basic and acidic residues" evidence="2">
    <location>
        <begin position="358"/>
        <end position="373"/>
    </location>
</feature>
<feature type="compositionally biased region" description="Acidic residues" evidence="2">
    <location>
        <begin position="375"/>
        <end position="388"/>
    </location>
</feature>
<feature type="compositionally biased region" description="Basic and acidic residues" evidence="2">
    <location>
        <begin position="400"/>
        <end position="417"/>
    </location>
</feature>
<feature type="compositionally biased region" description="Acidic residues" evidence="2">
    <location>
        <begin position="432"/>
        <end position="441"/>
    </location>
</feature>
<feature type="compositionally biased region" description="Acidic residues" evidence="2">
    <location>
        <begin position="456"/>
        <end position="470"/>
    </location>
</feature>
<feature type="compositionally biased region" description="Acidic residues" evidence="2">
    <location>
        <begin position="594"/>
        <end position="606"/>
    </location>
</feature>
<feature type="compositionally biased region" description="Basic and acidic residues" evidence="2">
    <location>
        <begin position="845"/>
        <end position="859"/>
    </location>
</feature>
<feature type="compositionally biased region" description="Acidic residues" evidence="2">
    <location>
        <begin position="860"/>
        <end position="875"/>
    </location>
</feature>
<feature type="compositionally biased region" description="Acidic residues" evidence="2">
    <location>
        <begin position="913"/>
        <end position="942"/>
    </location>
</feature>
<feature type="compositionally biased region" description="Acidic residues" evidence="2">
    <location>
        <begin position="960"/>
        <end position="969"/>
    </location>
</feature>
<feature type="compositionally biased region" description="Low complexity" evidence="2">
    <location>
        <begin position="1067"/>
        <end position="1076"/>
    </location>
</feature>
<feature type="compositionally biased region" description="Acidic residues" evidence="2">
    <location>
        <begin position="1094"/>
        <end position="1103"/>
    </location>
</feature>
<feature type="compositionally biased region" description="Basic residues" evidence="2">
    <location>
        <begin position="1109"/>
        <end position="1123"/>
    </location>
</feature>
<feature type="compositionally biased region" description="Acidic residues" evidence="2">
    <location>
        <begin position="1127"/>
        <end position="1154"/>
    </location>
</feature>
<feature type="modified residue" description="Phosphoserine" evidence="4">
    <location>
        <position position="45"/>
    </location>
</feature>
<feature type="modified residue" description="Phosphoserine" evidence="4">
    <location>
        <position position="49"/>
    </location>
</feature>
<feature type="modified residue" description="Phosphoserine" evidence="4">
    <location>
        <position position="52"/>
    </location>
</feature>
<feature type="modified residue" description="Phosphoserine" evidence="4">
    <location>
        <position position="64"/>
    </location>
</feature>
<feature type="modified residue" description="Phosphoserine" evidence="4">
    <location>
        <position position="75"/>
    </location>
</feature>
<feature type="modified residue" description="Phosphoserine" evidence="4">
    <location>
        <position position="109"/>
    </location>
</feature>
<feature type="modified residue" description="Phosphoserine" evidence="4">
    <location>
        <position position="114"/>
    </location>
</feature>
<feature type="modified residue" description="Phosphoserine" evidence="3 4">
    <location>
        <position position="350"/>
    </location>
</feature>
<feature type="modified residue" description="Phosphoserine" evidence="4">
    <location>
        <position position="354"/>
    </location>
</feature>
<feature type="modified residue" description="Phosphoserine" evidence="4">
    <location>
        <position position="381"/>
    </location>
</feature>
<feature type="modified residue" description="Phosphoserine" evidence="4">
    <location>
        <position position="404"/>
    </location>
</feature>
<feature type="modified residue" description="Phosphoserine" evidence="4">
    <location>
        <position position="406"/>
    </location>
</feature>
<feature type="modified residue" description="Phosphoserine" evidence="4">
    <location>
        <position position="432"/>
    </location>
</feature>
<feature type="modified residue" description="Phosphoserine" evidence="4">
    <location>
        <position position="434"/>
    </location>
</feature>
<feature type="modified residue" description="Phosphoserine" evidence="4">
    <location>
        <position position="444"/>
    </location>
</feature>
<feature type="modified residue" description="Phosphoserine" evidence="4">
    <location>
        <position position="456"/>
    </location>
</feature>
<feature type="modified residue" description="Phosphoserine" evidence="4">
    <location>
        <position position="458"/>
    </location>
</feature>
<feature type="modified residue" description="Phosphoserine" evidence="4">
    <location>
        <position position="468"/>
    </location>
</feature>
<feature type="modified residue" description="Phosphothreonine" evidence="4">
    <location>
        <position position="693"/>
    </location>
</feature>
<feature type="modified residue" description="Phosphoserine" evidence="3 4">
    <location>
        <position position="963"/>
    </location>
</feature>
<feature type="modified residue" description="Phosphothreonine" evidence="4">
    <location>
        <position position="973"/>
    </location>
</feature>
<feature type="modified residue" description="Phosphoserine" evidence="4">
    <location>
        <position position="990"/>
    </location>
</feature>
<feature type="modified residue" description="Phosphoserine" evidence="4">
    <location>
        <position position="1093"/>
    </location>
</feature>
<feature type="modified residue" description="Phosphoserine" evidence="4">
    <location>
        <position position="1094"/>
    </location>
</feature>
<feature type="modified residue" description="Phosphoserine" evidence="4">
    <location>
        <position position="1287"/>
    </location>
</feature>
<feature type="sequence conflict" description="In Ref. 3; AAM29654." evidence="6" ref="3">
    <original>VP</original>
    <variation>ET</variation>
    <location>
        <begin position="1083"/>
        <end position="1084"/>
    </location>
</feature>
<feature type="sequence conflict" description="In Ref. 3; AAM29654." evidence="6" ref="3">
    <original>T</original>
    <variation>I</variation>
    <location>
        <position position="1114"/>
    </location>
</feature>
<feature type="sequence conflict" description="In Ref. 3; AAM29654." evidence="6" ref="3">
    <original>D</original>
    <variation>E</variation>
    <location>
        <position position="1140"/>
    </location>
</feature>
<feature type="sequence conflict" description="In Ref. 3; AAM29654." evidence="6" ref="3">
    <original>E</original>
    <variation>D</variation>
    <location>
        <position position="1240"/>
    </location>
</feature>
<feature type="sequence conflict" description="In Ref. 3; AAM29654." evidence="6" ref="3">
    <original>I</original>
    <variation>V</variation>
    <location>
        <position position="1378"/>
    </location>
</feature>
<feature type="sequence conflict" description="In Ref. 3; AAM29654." evidence="6" ref="3">
    <original>S</original>
    <variation>T</variation>
    <location>
        <position position="1385"/>
    </location>
</feature>
<feature type="sequence conflict" description="In Ref. 3; AAM29654." evidence="6" ref="3">
    <original>I</original>
    <variation>M</variation>
    <location>
        <position position="1447"/>
    </location>
</feature>